<dbReference type="EC" id="6.1.1.11" evidence="1"/>
<dbReference type="EMBL" id="CP000746">
    <property type="protein sequence ID" value="ABR74470.1"/>
    <property type="molecule type" value="Genomic_DNA"/>
</dbReference>
<dbReference type="RefSeq" id="WP_012072847.1">
    <property type="nucleotide sequence ID" value="NC_009655.1"/>
</dbReference>
<dbReference type="SMR" id="A6VNC3"/>
<dbReference type="STRING" id="339671.Asuc_1104"/>
<dbReference type="KEGG" id="asu:Asuc_1104"/>
<dbReference type="eggNOG" id="COG0172">
    <property type="taxonomic scope" value="Bacteria"/>
</dbReference>
<dbReference type="HOGENOM" id="CLU_023797_1_1_6"/>
<dbReference type="OrthoDB" id="9804647at2"/>
<dbReference type="UniPathway" id="UPA00906">
    <property type="reaction ID" value="UER00895"/>
</dbReference>
<dbReference type="Proteomes" id="UP000001114">
    <property type="component" value="Chromosome"/>
</dbReference>
<dbReference type="GO" id="GO:0005737">
    <property type="term" value="C:cytoplasm"/>
    <property type="evidence" value="ECO:0007669"/>
    <property type="project" value="UniProtKB-SubCell"/>
</dbReference>
<dbReference type="GO" id="GO:0005524">
    <property type="term" value="F:ATP binding"/>
    <property type="evidence" value="ECO:0007669"/>
    <property type="project" value="UniProtKB-UniRule"/>
</dbReference>
<dbReference type="GO" id="GO:0004828">
    <property type="term" value="F:serine-tRNA ligase activity"/>
    <property type="evidence" value="ECO:0007669"/>
    <property type="project" value="UniProtKB-UniRule"/>
</dbReference>
<dbReference type="GO" id="GO:0016260">
    <property type="term" value="P:selenocysteine biosynthetic process"/>
    <property type="evidence" value="ECO:0007669"/>
    <property type="project" value="UniProtKB-UniRule"/>
</dbReference>
<dbReference type="GO" id="GO:0006434">
    <property type="term" value="P:seryl-tRNA aminoacylation"/>
    <property type="evidence" value="ECO:0007669"/>
    <property type="project" value="UniProtKB-UniRule"/>
</dbReference>
<dbReference type="CDD" id="cd00770">
    <property type="entry name" value="SerRS_core"/>
    <property type="match status" value="1"/>
</dbReference>
<dbReference type="Gene3D" id="3.30.930.10">
    <property type="entry name" value="Bira Bifunctional Protein, Domain 2"/>
    <property type="match status" value="1"/>
</dbReference>
<dbReference type="Gene3D" id="1.10.287.40">
    <property type="entry name" value="Serine-tRNA synthetase, tRNA binding domain"/>
    <property type="match status" value="1"/>
</dbReference>
<dbReference type="HAMAP" id="MF_00176">
    <property type="entry name" value="Ser_tRNA_synth_type1"/>
    <property type="match status" value="1"/>
</dbReference>
<dbReference type="InterPro" id="IPR002314">
    <property type="entry name" value="aa-tRNA-synt_IIb"/>
</dbReference>
<dbReference type="InterPro" id="IPR006195">
    <property type="entry name" value="aa-tRNA-synth_II"/>
</dbReference>
<dbReference type="InterPro" id="IPR045864">
    <property type="entry name" value="aa-tRNA-synth_II/BPL/LPL"/>
</dbReference>
<dbReference type="InterPro" id="IPR002317">
    <property type="entry name" value="Ser-tRNA-ligase_type_1"/>
</dbReference>
<dbReference type="InterPro" id="IPR015866">
    <property type="entry name" value="Ser-tRNA-synth_1_N"/>
</dbReference>
<dbReference type="InterPro" id="IPR042103">
    <property type="entry name" value="SerRS_1_N_sf"/>
</dbReference>
<dbReference type="InterPro" id="IPR033729">
    <property type="entry name" value="SerRS_core"/>
</dbReference>
<dbReference type="InterPro" id="IPR010978">
    <property type="entry name" value="tRNA-bd_arm"/>
</dbReference>
<dbReference type="NCBIfam" id="TIGR00414">
    <property type="entry name" value="serS"/>
    <property type="match status" value="1"/>
</dbReference>
<dbReference type="PANTHER" id="PTHR43697:SF1">
    <property type="entry name" value="SERINE--TRNA LIGASE"/>
    <property type="match status" value="1"/>
</dbReference>
<dbReference type="PANTHER" id="PTHR43697">
    <property type="entry name" value="SERYL-TRNA SYNTHETASE"/>
    <property type="match status" value="1"/>
</dbReference>
<dbReference type="Pfam" id="PF02403">
    <property type="entry name" value="Seryl_tRNA_N"/>
    <property type="match status" value="1"/>
</dbReference>
<dbReference type="Pfam" id="PF00587">
    <property type="entry name" value="tRNA-synt_2b"/>
    <property type="match status" value="1"/>
</dbReference>
<dbReference type="PIRSF" id="PIRSF001529">
    <property type="entry name" value="Ser-tRNA-synth_IIa"/>
    <property type="match status" value="1"/>
</dbReference>
<dbReference type="PRINTS" id="PR00981">
    <property type="entry name" value="TRNASYNTHSER"/>
</dbReference>
<dbReference type="SUPFAM" id="SSF55681">
    <property type="entry name" value="Class II aaRS and biotin synthetases"/>
    <property type="match status" value="1"/>
</dbReference>
<dbReference type="SUPFAM" id="SSF46589">
    <property type="entry name" value="tRNA-binding arm"/>
    <property type="match status" value="1"/>
</dbReference>
<dbReference type="PROSITE" id="PS50862">
    <property type="entry name" value="AA_TRNA_LIGASE_II"/>
    <property type="match status" value="1"/>
</dbReference>
<proteinExistence type="inferred from homology"/>
<accession>A6VNC3</accession>
<keyword id="KW-0030">Aminoacyl-tRNA synthetase</keyword>
<keyword id="KW-0067">ATP-binding</keyword>
<keyword id="KW-0963">Cytoplasm</keyword>
<keyword id="KW-0436">Ligase</keyword>
<keyword id="KW-0547">Nucleotide-binding</keyword>
<keyword id="KW-0648">Protein biosynthesis</keyword>
<keyword id="KW-1185">Reference proteome</keyword>
<feature type="chain" id="PRO_1000071630" description="Serine--tRNA ligase">
    <location>
        <begin position="1"/>
        <end position="429"/>
    </location>
</feature>
<feature type="binding site" evidence="1">
    <location>
        <begin position="235"/>
        <end position="237"/>
    </location>
    <ligand>
        <name>L-serine</name>
        <dbReference type="ChEBI" id="CHEBI:33384"/>
    </ligand>
</feature>
<feature type="binding site" evidence="1">
    <location>
        <begin position="266"/>
        <end position="268"/>
    </location>
    <ligand>
        <name>ATP</name>
        <dbReference type="ChEBI" id="CHEBI:30616"/>
    </ligand>
</feature>
<feature type="binding site" evidence="1">
    <location>
        <position position="289"/>
    </location>
    <ligand>
        <name>L-serine</name>
        <dbReference type="ChEBI" id="CHEBI:33384"/>
    </ligand>
</feature>
<feature type="binding site" evidence="1">
    <location>
        <begin position="353"/>
        <end position="356"/>
    </location>
    <ligand>
        <name>ATP</name>
        <dbReference type="ChEBI" id="CHEBI:30616"/>
    </ligand>
</feature>
<feature type="binding site" evidence="1">
    <location>
        <position position="389"/>
    </location>
    <ligand>
        <name>L-serine</name>
        <dbReference type="ChEBI" id="CHEBI:33384"/>
    </ligand>
</feature>
<name>SYS_ACTSZ</name>
<comment type="function">
    <text evidence="1">Catalyzes the attachment of serine to tRNA(Ser). Is also able to aminoacylate tRNA(Sec) with serine, to form the misacylated tRNA L-seryl-tRNA(Sec), which will be further converted into selenocysteinyl-tRNA(Sec).</text>
</comment>
<comment type="catalytic activity">
    <reaction evidence="1">
        <text>tRNA(Ser) + L-serine + ATP = L-seryl-tRNA(Ser) + AMP + diphosphate + H(+)</text>
        <dbReference type="Rhea" id="RHEA:12292"/>
        <dbReference type="Rhea" id="RHEA-COMP:9669"/>
        <dbReference type="Rhea" id="RHEA-COMP:9703"/>
        <dbReference type="ChEBI" id="CHEBI:15378"/>
        <dbReference type="ChEBI" id="CHEBI:30616"/>
        <dbReference type="ChEBI" id="CHEBI:33019"/>
        <dbReference type="ChEBI" id="CHEBI:33384"/>
        <dbReference type="ChEBI" id="CHEBI:78442"/>
        <dbReference type="ChEBI" id="CHEBI:78533"/>
        <dbReference type="ChEBI" id="CHEBI:456215"/>
        <dbReference type="EC" id="6.1.1.11"/>
    </reaction>
</comment>
<comment type="catalytic activity">
    <reaction evidence="1">
        <text>tRNA(Sec) + L-serine + ATP = L-seryl-tRNA(Sec) + AMP + diphosphate + H(+)</text>
        <dbReference type="Rhea" id="RHEA:42580"/>
        <dbReference type="Rhea" id="RHEA-COMP:9742"/>
        <dbReference type="Rhea" id="RHEA-COMP:10128"/>
        <dbReference type="ChEBI" id="CHEBI:15378"/>
        <dbReference type="ChEBI" id="CHEBI:30616"/>
        <dbReference type="ChEBI" id="CHEBI:33019"/>
        <dbReference type="ChEBI" id="CHEBI:33384"/>
        <dbReference type="ChEBI" id="CHEBI:78442"/>
        <dbReference type="ChEBI" id="CHEBI:78533"/>
        <dbReference type="ChEBI" id="CHEBI:456215"/>
        <dbReference type="EC" id="6.1.1.11"/>
    </reaction>
</comment>
<comment type="pathway">
    <text evidence="1">Aminoacyl-tRNA biosynthesis; selenocysteinyl-tRNA(Sec) biosynthesis; L-seryl-tRNA(Sec) from L-serine and tRNA(Sec): step 1/1.</text>
</comment>
<comment type="subunit">
    <text evidence="1">Homodimer. The tRNA molecule binds across the dimer.</text>
</comment>
<comment type="subcellular location">
    <subcellularLocation>
        <location evidence="1">Cytoplasm</location>
    </subcellularLocation>
</comment>
<comment type="domain">
    <text evidence="1">Consists of two distinct domains, a catalytic core and a N-terminal extension that is involved in tRNA binding.</text>
</comment>
<comment type="similarity">
    <text evidence="1">Belongs to the class-II aminoacyl-tRNA synthetase family. Type-1 seryl-tRNA synthetase subfamily.</text>
</comment>
<protein>
    <recommendedName>
        <fullName evidence="1">Serine--tRNA ligase</fullName>
        <ecNumber evidence="1">6.1.1.11</ecNumber>
    </recommendedName>
    <alternativeName>
        <fullName evidence="1">Seryl-tRNA synthetase</fullName>
        <shortName evidence="1">SerRS</shortName>
    </alternativeName>
    <alternativeName>
        <fullName evidence="1">Seryl-tRNA(Ser/Sec) synthetase</fullName>
    </alternativeName>
</protein>
<gene>
    <name evidence="1" type="primary">serS</name>
    <name type="ordered locus">Asuc_1104</name>
</gene>
<sequence length="429" mass="48299">MIDPNLLRNNLEETAQKLKEKRNFILDVKQLRKLEEQRKALQVKTETLQAERNLRSKAIGAAKARGENIESLLNEVDHLGIELAQAKALFDDVSAELNTILLTIPNIPADEVPQGKDDTENQEVARWGTPRTFDFEVKDHVTLGENIDGLDFSAGVKLSGARFAVMKGRIAKLHRALAQFMLDLHTEKHGYLETYVPYLVNHTTLYGTGQLPKFGEDLFHTKALEGEQPYALIPTAEVPVTNLVRDEILSVENLPLKMTAHTPCFRSEAGSYGRDTRGLIRMHQFDKVEMVQIVEPEKSMEALEELTGHAEEVLRLLNLPYRKVLLCSGDMGFGACKTYDLEVWLPAQNTYREISSCSNMWDFQARRMQARCRAKGDKKTRLVHTLNGSGLAVGRTLVAVLENYQNADGSITVPEVLRPYMDNVDTIGR</sequence>
<reference key="1">
    <citation type="journal article" date="2010" name="BMC Genomics">
        <title>A genomic perspective on the potential of Actinobacillus succinogenes for industrial succinate production.</title>
        <authorList>
            <person name="McKinlay J.B."/>
            <person name="Laivenieks M."/>
            <person name="Schindler B.D."/>
            <person name="McKinlay A.A."/>
            <person name="Siddaramappa S."/>
            <person name="Challacombe J.F."/>
            <person name="Lowry S.R."/>
            <person name="Clum A."/>
            <person name="Lapidus A.L."/>
            <person name="Burkhart K.B."/>
            <person name="Harkins V."/>
            <person name="Vieille C."/>
        </authorList>
    </citation>
    <scope>NUCLEOTIDE SEQUENCE [LARGE SCALE GENOMIC DNA]</scope>
    <source>
        <strain>ATCC 55618 / DSM 22257 / CCUG 43843 / 130Z</strain>
    </source>
</reference>
<evidence type="ECO:0000255" key="1">
    <source>
        <dbReference type="HAMAP-Rule" id="MF_00176"/>
    </source>
</evidence>
<organism>
    <name type="scientific">Actinobacillus succinogenes (strain ATCC 55618 / DSM 22257 / CCUG 43843 / 130Z)</name>
    <dbReference type="NCBI Taxonomy" id="339671"/>
    <lineage>
        <taxon>Bacteria</taxon>
        <taxon>Pseudomonadati</taxon>
        <taxon>Pseudomonadota</taxon>
        <taxon>Gammaproteobacteria</taxon>
        <taxon>Pasteurellales</taxon>
        <taxon>Pasteurellaceae</taxon>
        <taxon>Actinobacillus</taxon>
    </lineage>
</organism>